<dbReference type="EMBL" id="AF154245">
    <property type="protein sequence ID" value="AAF24172.1"/>
    <property type="molecule type" value="Genomic_DNA"/>
</dbReference>
<dbReference type="RefSeq" id="NP_001007613.1">
    <property type="nucleotide sequence ID" value="NM_001007612.1"/>
</dbReference>
<dbReference type="SMR" id="Q9QXY8"/>
<dbReference type="FunCoup" id="Q9QXY8">
    <property type="interactions" value="234"/>
</dbReference>
<dbReference type="STRING" id="10116.ENSRNOP00000000256"/>
<dbReference type="GlyCosmos" id="Q9QXY8">
    <property type="glycosylation" value="1 site, No reported glycans"/>
</dbReference>
<dbReference type="GlyGen" id="Q9QXY8">
    <property type="glycosylation" value="1 site"/>
</dbReference>
<dbReference type="PaxDb" id="10116-ENSRNOP00000000256"/>
<dbReference type="Ensembl" id="ENSRNOT00000000256.5">
    <property type="protein sequence ID" value="ENSRNOP00000000256.2"/>
    <property type="gene ID" value="ENSRNOG00000000239.5"/>
</dbReference>
<dbReference type="GeneID" id="287561"/>
<dbReference type="KEGG" id="rno:287561"/>
<dbReference type="AGR" id="RGD:1359152"/>
<dbReference type="CTD" id="6354"/>
<dbReference type="RGD" id="1359152">
    <property type="gene designation" value="Ccl7"/>
</dbReference>
<dbReference type="eggNOG" id="ENOG502S6ZP">
    <property type="taxonomic scope" value="Eukaryota"/>
</dbReference>
<dbReference type="GeneTree" id="ENSGT01130000278316"/>
<dbReference type="HOGENOM" id="CLU_141716_1_0_1"/>
<dbReference type="InParanoid" id="Q9QXY8"/>
<dbReference type="OMA" id="QKWVQEF"/>
<dbReference type="OrthoDB" id="9404618at2759"/>
<dbReference type="PhylomeDB" id="Q9QXY8"/>
<dbReference type="TreeFam" id="TF334888"/>
<dbReference type="PRO" id="PR:Q9QXY8"/>
<dbReference type="Proteomes" id="UP000002494">
    <property type="component" value="Chromosome 10"/>
</dbReference>
<dbReference type="Bgee" id="ENSRNOG00000000239">
    <property type="expression patterns" value="Expressed in stomach and 17 other cell types or tissues"/>
</dbReference>
<dbReference type="GO" id="GO:0005615">
    <property type="term" value="C:extracellular space"/>
    <property type="evidence" value="ECO:0000266"/>
    <property type="project" value="RGD"/>
</dbReference>
<dbReference type="GO" id="GO:0048020">
    <property type="term" value="F:CCR chemokine receptor binding"/>
    <property type="evidence" value="ECO:0000318"/>
    <property type="project" value="GO_Central"/>
</dbReference>
<dbReference type="GO" id="GO:0031726">
    <property type="term" value="F:CCR1 chemokine receptor binding"/>
    <property type="evidence" value="ECO:0000266"/>
    <property type="project" value="RGD"/>
</dbReference>
<dbReference type="GO" id="GO:0031727">
    <property type="term" value="F:CCR2 chemokine receptor binding"/>
    <property type="evidence" value="ECO:0000266"/>
    <property type="project" value="RGD"/>
</dbReference>
<dbReference type="GO" id="GO:0008009">
    <property type="term" value="F:chemokine activity"/>
    <property type="evidence" value="ECO:0000266"/>
    <property type="project" value="RGD"/>
</dbReference>
<dbReference type="GO" id="GO:0008201">
    <property type="term" value="F:heparin binding"/>
    <property type="evidence" value="ECO:0007669"/>
    <property type="project" value="UniProtKB-KW"/>
</dbReference>
<dbReference type="GO" id="GO:0061844">
    <property type="term" value="P:antimicrobial humoral immune response mediated by antimicrobial peptide"/>
    <property type="evidence" value="ECO:0000318"/>
    <property type="project" value="GO_Central"/>
</dbReference>
<dbReference type="GO" id="GO:0071361">
    <property type="term" value="P:cellular response to ethanol"/>
    <property type="evidence" value="ECO:0000314"/>
    <property type="project" value="RGD"/>
</dbReference>
<dbReference type="GO" id="GO:0070098">
    <property type="term" value="P:chemokine-mediated signaling pathway"/>
    <property type="evidence" value="ECO:0000318"/>
    <property type="project" value="GO_Central"/>
</dbReference>
<dbReference type="GO" id="GO:0007010">
    <property type="term" value="P:cytoskeleton organization"/>
    <property type="evidence" value="ECO:0000266"/>
    <property type="project" value="RGD"/>
</dbReference>
<dbReference type="GO" id="GO:0048245">
    <property type="term" value="P:eosinophil chemotaxis"/>
    <property type="evidence" value="ECO:0000266"/>
    <property type="project" value="RGD"/>
</dbReference>
<dbReference type="GO" id="GO:0006954">
    <property type="term" value="P:inflammatory response"/>
    <property type="evidence" value="ECO:0000318"/>
    <property type="project" value="GO_Central"/>
</dbReference>
<dbReference type="GO" id="GO:0030335">
    <property type="term" value="P:positive regulation of cell migration"/>
    <property type="evidence" value="ECO:0000266"/>
    <property type="project" value="RGD"/>
</dbReference>
<dbReference type="GO" id="GO:2000503">
    <property type="term" value="P:positive regulation of natural killer cell chemotaxis"/>
    <property type="evidence" value="ECO:0000266"/>
    <property type="project" value="RGD"/>
</dbReference>
<dbReference type="GO" id="GO:0008360">
    <property type="term" value="P:regulation of cell shape"/>
    <property type="evidence" value="ECO:0000266"/>
    <property type="project" value="RGD"/>
</dbReference>
<dbReference type="GO" id="GO:0010332">
    <property type="term" value="P:response to gamma radiation"/>
    <property type="evidence" value="ECO:0000270"/>
    <property type="project" value="RGD"/>
</dbReference>
<dbReference type="CDD" id="cd00272">
    <property type="entry name" value="Chemokine_CC"/>
    <property type="match status" value="1"/>
</dbReference>
<dbReference type="FunFam" id="2.40.50.40:FF:000002">
    <property type="entry name" value="C-C motif chemokine"/>
    <property type="match status" value="1"/>
</dbReference>
<dbReference type="Gene3D" id="2.40.50.40">
    <property type="match status" value="1"/>
</dbReference>
<dbReference type="InterPro" id="IPR039809">
    <property type="entry name" value="Chemokine_b/g/d"/>
</dbReference>
<dbReference type="InterPro" id="IPR000827">
    <property type="entry name" value="Chemokine_CC_CS"/>
</dbReference>
<dbReference type="InterPro" id="IPR001811">
    <property type="entry name" value="Chemokine_IL8-like_dom"/>
</dbReference>
<dbReference type="InterPro" id="IPR036048">
    <property type="entry name" value="Interleukin_8-like_sf"/>
</dbReference>
<dbReference type="PANTHER" id="PTHR12015:SF161">
    <property type="entry name" value="C-C MOTIF CHEMOKINE 7"/>
    <property type="match status" value="1"/>
</dbReference>
<dbReference type="PANTHER" id="PTHR12015">
    <property type="entry name" value="SMALL INDUCIBLE CYTOKINE A"/>
    <property type="match status" value="1"/>
</dbReference>
<dbReference type="Pfam" id="PF00048">
    <property type="entry name" value="IL8"/>
    <property type="match status" value="1"/>
</dbReference>
<dbReference type="SMART" id="SM00199">
    <property type="entry name" value="SCY"/>
    <property type="match status" value="1"/>
</dbReference>
<dbReference type="SUPFAM" id="SSF54117">
    <property type="entry name" value="Interleukin 8-like chemokines"/>
    <property type="match status" value="1"/>
</dbReference>
<dbReference type="PROSITE" id="PS00472">
    <property type="entry name" value="SMALL_CYTOKINES_CC"/>
    <property type="match status" value="1"/>
</dbReference>
<proteinExistence type="inferred from homology"/>
<evidence type="ECO:0000250" key="1"/>
<evidence type="ECO:0000250" key="2">
    <source>
        <dbReference type="UniProtKB" id="P80098"/>
    </source>
</evidence>
<evidence type="ECO:0000255" key="3"/>
<evidence type="ECO:0000305" key="4"/>
<organism>
    <name type="scientific">Rattus norvegicus</name>
    <name type="common">Rat</name>
    <dbReference type="NCBI Taxonomy" id="10116"/>
    <lineage>
        <taxon>Eukaryota</taxon>
        <taxon>Metazoa</taxon>
        <taxon>Chordata</taxon>
        <taxon>Craniata</taxon>
        <taxon>Vertebrata</taxon>
        <taxon>Euteleostomi</taxon>
        <taxon>Mammalia</taxon>
        <taxon>Eutheria</taxon>
        <taxon>Euarchontoglires</taxon>
        <taxon>Glires</taxon>
        <taxon>Rodentia</taxon>
        <taxon>Myomorpha</taxon>
        <taxon>Muroidea</taxon>
        <taxon>Muridae</taxon>
        <taxon>Murinae</taxon>
        <taxon>Rattus</taxon>
    </lineage>
</organism>
<feature type="signal peptide" evidence="3">
    <location>
        <begin position="1"/>
        <end position="23"/>
    </location>
</feature>
<feature type="chain" id="PRO_0000005185" description="C-C motif chemokine 7">
    <location>
        <begin position="24"/>
        <end position="97"/>
    </location>
</feature>
<feature type="modified residue" description="Pyrrolidone carboxylic acid" evidence="2">
    <location>
        <position position="24"/>
    </location>
</feature>
<feature type="glycosylation site" description="N-linked (GlcNAc...) asparagine" evidence="3">
    <location>
        <position position="29"/>
    </location>
</feature>
<feature type="disulfide bond" evidence="1">
    <location>
        <begin position="33"/>
        <end position="57"/>
    </location>
</feature>
<feature type="disulfide bond" evidence="1">
    <location>
        <begin position="34"/>
        <end position="73"/>
    </location>
</feature>
<comment type="function">
    <text evidence="1">Chemotactic factor that attracts monocytes and eosinophils, but not neutrophils. Augments monocyte anti-tumor activity (By similarity).</text>
</comment>
<comment type="subunit">
    <text evidence="2">Monomer. Interacts with TNFAIP6 (via Link domain).</text>
</comment>
<comment type="subcellular location">
    <subcellularLocation>
        <location>Secreted</location>
    </subcellularLocation>
</comment>
<comment type="similarity">
    <text evidence="4">Belongs to the intercrine beta (chemokine CC) family.</text>
</comment>
<reference key="1">
    <citation type="journal article" date="1999" name="Brain Res. Mol. Brain Res.">
        <title>Molecular cloning and expression of the rat monocyte chemotactic protein-3 gene: a possible role in stroke.</title>
        <authorList>
            <person name="Wang X."/>
            <person name="Li X."/>
            <person name="Yaish-Ohad S."/>
            <person name="Sarau H.M."/>
            <person name="Barone F.C."/>
            <person name="Feuerstein G.Z."/>
        </authorList>
    </citation>
    <scope>NUCLEOTIDE SEQUENCE [GENOMIC DNA]</scope>
</reference>
<accession>Q9QXY8</accession>
<protein>
    <recommendedName>
        <fullName>C-C motif chemokine 7</fullName>
    </recommendedName>
    <alternativeName>
        <fullName>Monocyte chemoattractant protein 3</fullName>
    </alternativeName>
    <alternativeName>
        <fullName>Monocyte chemotactic protein 3</fullName>
        <shortName>MCP-3</shortName>
    </alternativeName>
    <alternativeName>
        <fullName>Small-inducible cytokine A7</fullName>
    </alternativeName>
</protein>
<sequence length="97" mass="10906">MQISAALLCVLLTAAAFTVHVWAQPDGTNSSTCCYVKKQKIPKRNLKSYRKITSSRCPWEAVIFKTKKGMEVCAEAHQKWVEEAIAYLDMKTSTPKP</sequence>
<keyword id="KW-0145">Chemotaxis</keyword>
<keyword id="KW-0202">Cytokine</keyword>
<keyword id="KW-1015">Disulfide bond</keyword>
<keyword id="KW-0325">Glycoprotein</keyword>
<keyword id="KW-0358">Heparin-binding</keyword>
<keyword id="KW-0395">Inflammatory response</keyword>
<keyword id="KW-0873">Pyrrolidone carboxylic acid</keyword>
<keyword id="KW-1185">Reference proteome</keyword>
<keyword id="KW-0964">Secreted</keyword>
<keyword id="KW-0732">Signal</keyword>
<gene>
    <name type="primary">Ccl7</name>
    <name type="synonym">Mcp3</name>
    <name type="synonym">Scya7</name>
</gene>
<name>CCL7_RAT</name>